<feature type="chain" id="PRO_0000046634" description="C-type lectin domain family 5 member A">
    <location>
        <begin position="1"/>
        <end position="185"/>
    </location>
</feature>
<feature type="topological domain" description="Cytoplasmic" evidence="3">
    <location>
        <begin position="1"/>
        <end position="4"/>
    </location>
</feature>
<feature type="transmembrane region" description="Helical; Signal-anchor for type II membrane protein" evidence="3">
    <location>
        <begin position="5"/>
        <end position="27"/>
    </location>
</feature>
<feature type="topological domain" description="Extracellular" evidence="3">
    <location>
        <begin position="28"/>
        <end position="185"/>
    </location>
</feature>
<feature type="domain" description="C-type lectin" evidence="4">
    <location>
        <begin position="75"/>
        <end position="181"/>
    </location>
</feature>
<feature type="glycosylation site" description="N-linked (GlcNAc...) asparagine" evidence="3">
    <location>
        <position position="35"/>
    </location>
</feature>
<feature type="glycosylation site" description="N-linked (GlcNAc...) asparagine" evidence="3">
    <location>
        <position position="55"/>
    </location>
</feature>
<feature type="glycosylation site" description="N-linked (GlcNAc...) asparagine" evidence="3">
    <location>
        <position position="90"/>
    </location>
</feature>
<feature type="glycosylation site" description="N-linked (GlcNAc...) asparagine" evidence="3">
    <location>
        <position position="117"/>
    </location>
</feature>
<feature type="glycosylation site" description="N-linked (GlcNAc...) asparagine" evidence="3">
    <location>
        <position position="141"/>
    </location>
</feature>
<feature type="glycosylation site" description="N-linked (GlcNAc...) asparagine" evidence="3">
    <location>
        <position position="146"/>
    </location>
</feature>
<feature type="disulfide bond" evidence="4">
    <location>
        <begin position="68"/>
        <end position="79"/>
    </location>
</feature>
<feature type="disulfide bond" evidence="4">
    <location>
        <begin position="96"/>
        <end position="180"/>
    </location>
</feature>
<feature type="disulfide bond" evidence="4">
    <location>
        <begin position="158"/>
        <end position="172"/>
    </location>
</feature>
<feature type="splice variant" id="VSP_012841" description="In isoform 2." evidence="6">
    <location>
        <begin position="28"/>
        <end position="47"/>
    </location>
</feature>
<evidence type="ECO:0000250" key="1">
    <source>
        <dbReference type="UniProtKB" id="Q9NY25"/>
    </source>
</evidence>
<evidence type="ECO:0000250" key="2">
    <source>
        <dbReference type="UniProtKB" id="Q9R007"/>
    </source>
</evidence>
<evidence type="ECO:0000255" key="3"/>
<evidence type="ECO:0000255" key="4">
    <source>
        <dbReference type="PROSITE-ProRule" id="PRU00040"/>
    </source>
</evidence>
<evidence type="ECO:0000269" key="5">
    <source>
    </source>
</evidence>
<evidence type="ECO:0000303" key="6">
    <source>
    </source>
</evidence>
<organism>
    <name type="scientific">Sus scrofa</name>
    <name type="common">Pig</name>
    <dbReference type="NCBI Taxonomy" id="9823"/>
    <lineage>
        <taxon>Eukaryota</taxon>
        <taxon>Metazoa</taxon>
        <taxon>Chordata</taxon>
        <taxon>Craniata</taxon>
        <taxon>Vertebrata</taxon>
        <taxon>Euteleostomi</taxon>
        <taxon>Mammalia</taxon>
        <taxon>Eutheria</taxon>
        <taxon>Laurasiatheria</taxon>
        <taxon>Artiodactyla</taxon>
        <taxon>Suina</taxon>
        <taxon>Suidae</taxon>
        <taxon>Sus</taxon>
    </lineage>
</organism>
<dbReference type="EMBL" id="AF285449">
    <property type="protein sequence ID" value="AAG29427.1"/>
    <property type="molecule type" value="mRNA"/>
</dbReference>
<dbReference type="EMBL" id="AF285450">
    <property type="protein sequence ID" value="AAG29428.1"/>
    <property type="molecule type" value="mRNA"/>
</dbReference>
<dbReference type="RefSeq" id="NP_999155.1">
    <molecule id="Q9GLF3-1"/>
    <property type="nucleotide sequence ID" value="NM_213990.1"/>
</dbReference>
<dbReference type="RefSeq" id="XP_005657788.2">
    <molecule id="Q9GLF3-1"/>
    <property type="nucleotide sequence ID" value="XM_005657731.3"/>
</dbReference>
<dbReference type="RefSeq" id="XP_020934163.1">
    <molecule id="Q9GLF3-2"/>
    <property type="nucleotide sequence ID" value="XM_021078504.1"/>
</dbReference>
<dbReference type="SMR" id="Q9GLF3"/>
<dbReference type="FunCoup" id="Q9GLF3">
    <property type="interactions" value="154"/>
</dbReference>
<dbReference type="STRING" id="9823.ENSSSCP00000024397"/>
<dbReference type="GlyCosmos" id="Q9GLF3">
    <property type="glycosylation" value="6 sites, No reported glycans"/>
</dbReference>
<dbReference type="GlyGen" id="Q9GLF3">
    <property type="glycosylation" value="6 sites"/>
</dbReference>
<dbReference type="PaxDb" id="9823-ENSSSCP00000024397"/>
<dbReference type="Ensembl" id="ENSSSCT00000100326.1">
    <molecule id="Q9GLF3-1"/>
    <property type="protein sequence ID" value="ENSSSCP00000077179.1"/>
    <property type="gene ID" value="ENSSSCG00000021933.4"/>
</dbReference>
<dbReference type="Ensembl" id="ENSSSCT00035055257.1">
    <molecule id="Q9GLF3-1"/>
    <property type="protein sequence ID" value="ENSSSCP00035022223.1"/>
    <property type="gene ID" value="ENSSSCG00035041588.1"/>
</dbReference>
<dbReference type="Ensembl" id="ENSSSCT00070042942.1">
    <molecule id="Q9GLF3-1"/>
    <property type="protein sequence ID" value="ENSSSCP00070036128.1"/>
    <property type="gene ID" value="ENSSSCG00070021595.1"/>
</dbReference>
<dbReference type="Ensembl" id="ENSSSCT00105025863">
    <molecule id="Q9GLF3-1"/>
    <property type="protein sequence ID" value="ENSSSCP00105018336"/>
    <property type="gene ID" value="ENSSSCG00105013245"/>
</dbReference>
<dbReference type="GeneID" id="397050"/>
<dbReference type="KEGG" id="ssc:397050"/>
<dbReference type="CTD" id="23601"/>
<dbReference type="eggNOG" id="KOG4297">
    <property type="taxonomic scope" value="Eukaryota"/>
</dbReference>
<dbReference type="GeneTree" id="ENSGT00910000144330"/>
<dbReference type="InParanoid" id="Q9GLF3"/>
<dbReference type="OMA" id="WHWIDNS"/>
<dbReference type="OrthoDB" id="7357196at2759"/>
<dbReference type="Reactome" id="R-SSC-2172127">
    <property type="pathway name" value="DAP12 interactions"/>
</dbReference>
<dbReference type="Reactome" id="R-SSC-6798695">
    <property type="pathway name" value="Neutrophil degranulation"/>
</dbReference>
<dbReference type="Proteomes" id="UP000008227">
    <property type="component" value="Chromosome 18"/>
</dbReference>
<dbReference type="Proteomes" id="UP000314985">
    <property type="component" value="Chromosome 18"/>
</dbReference>
<dbReference type="Proteomes" id="UP000694570">
    <property type="component" value="Unplaced"/>
</dbReference>
<dbReference type="Proteomes" id="UP000694571">
    <property type="component" value="Unplaced"/>
</dbReference>
<dbReference type="Proteomes" id="UP000694720">
    <property type="component" value="Unplaced"/>
</dbReference>
<dbReference type="Proteomes" id="UP000694722">
    <property type="component" value="Unplaced"/>
</dbReference>
<dbReference type="Proteomes" id="UP000694723">
    <property type="component" value="Unplaced"/>
</dbReference>
<dbReference type="Proteomes" id="UP000694724">
    <property type="component" value="Unplaced"/>
</dbReference>
<dbReference type="Proteomes" id="UP000694725">
    <property type="component" value="Unplaced"/>
</dbReference>
<dbReference type="Proteomes" id="UP000694726">
    <property type="component" value="Unplaced"/>
</dbReference>
<dbReference type="Proteomes" id="UP000694727">
    <property type="component" value="Unplaced"/>
</dbReference>
<dbReference type="Proteomes" id="UP000694728">
    <property type="component" value="Unplaced"/>
</dbReference>
<dbReference type="ExpressionAtlas" id="Q9GLF3">
    <property type="expression patterns" value="baseline and differential"/>
</dbReference>
<dbReference type="GO" id="GO:0009986">
    <property type="term" value="C:cell surface"/>
    <property type="evidence" value="ECO:0000250"/>
    <property type="project" value="UniProtKB"/>
</dbReference>
<dbReference type="GO" id="GO:0005829">
    <property type="term" value="C:cytosol"/>
    <property type="evidence" value="ECO:0007669"/>
    <property type="project" value="Ensembl"/>
</dbReference>
<dbReference type="GO" id="GO:0005886">
    <property type="term" value="C:plasma membrane"/>
    <property type="evidence" value="ECO:0007669"/>
    <property type="project" value="UniProtKB-SubCell"/>
</dbReference>
<dbReference type="GO" id="GO:0030246">
    <property type="term" value="F:carbohydrate binding"/>
    <property type="evidence" value="ECO:0007669"/>
    <property type="project" value="UniProtKB-KW"/>
</dbReference>
<dbReference type="GO" id="GO:0001618">
    <property type="term" value="F:virus receptor activity"/>
    <property type="evidence" value="ECO:0000318"/>
    <property type="project" value="GO_Central"/>
</dbReference>
<dbReference type="GO" id="GO:0045087">
    <property type="term" value="P:innate immune response"/>
    <property type="evidence" value="ECO:0000318"/>
    <property type="project" value="GO_Central"/>
</dbReference>
<dbReference type="GO" id="GO:0030099">
    <property type="term" value="P:myeloid cell differentiation"/>
    <property type="evidence" value="ECO:0007669"/>
    <property type="project" value="Ensembl"/>
</dbReference>
<dbReference type="GO" id="GO:0043066">
    <property type="term" value="P:negative regulation of apoptotic process"/>
    <property type="evidence" value="ECO:0000250"/>
    <property type="project" value="UniProtKB"/>
</dbReference>
<dbReference type="GO" id="GO:0033033">
    <property type="term" value="P:negative regulation of myeloid cell apoptotic process"/>
    <property type="evidence" value="ECO:0007669"/>
    <property type="project" value="Ensembl"/>
</dbReference>
<dbReference type="GO" id="GO:0002076">
    <property type="term" value="P:osteoblast development"/>
    <property type="evidence" value="ECO:0000250"/>
    <property type="project" value="UniProtKB"/>
</dbReference>
<dbReference type="GO" id="GO:0001819">
    <property type="term" value="P:positive regulation of cytokine production"/>
    <property type="evidence" value="ECO:0007669"/>
    <property type="project" value="Ensembl"/>
</dbReference>
<dbReference type="CDD" id="cd03593">
    <property type="entry name" value="CLECT_NK_receptors_like"/>
    <property type="match status" value="1"/>
</dbReference>
<dbReference type="FunFam" id="3.10.100.10:FF:000065">
    <property type="entry name" value="C-type lectin domain family 5 member A"/>
    <property type="match status" value="1"/>
</dbReference>
<dbReference type="Gene3D" id="3.10.100.10">
    <property type="entry name" value="Mannose-Binding Protein A, subunit A"/>
    <property type="match status" value="1"/>
</dbReference>
<dbReference type="InterPro" id="IPR001304">
    <property type="entry name" value="C-type_lectin-like"/>
</dbReference>
<dbReference type="InterPro" id="IPR016186">
    <property type="entry name" value="C-type_lectin-like/link_sf"/>
</dbReference>
<dbReference type="InterPro" id="IPR052869">
    <property type="entry name" value="CLEC5A"/>
</dbReference>
<dbReference type="InterPro" id="IPR016187">
    <property type="entry name" value="CTDL_fold"/>
</dbReference>
<dbReference type="InterPro" id="IPR033992">
    <property type="entry name" value="NKR-like_CTLD"/>
</dbReference>
<dbReference type="PANTHER" id="PTHR47536">
    <property type="entry name" value="C-TYPE LECTIN DOMAIN FAMILY 5 MEMBER A"/>
    <property type="match status" value="1"/>
</dbReference>
<dbReference type="PANTHER" id="PTHR47536:SF1">
    <property type="entry name" value="C-TYPE LECTIN DOMAIN FAMILY 5 MEMBER A"/>
    <property type="match status" value="1"/>
</dbReference>
<dbReference type="Pfam" id="PF00059">
    <property type="entry name" value="Lectin_C"/>
    <property type="match status" value="1"/>
</dbReference>
<dbReference type="SMART" id="SM00034">
    <property type="entry name" value="CLECT"/>
    <property type="match status" value="1"/>
</dbReference>
<dbReference type="SUPFAM" id="SSF56436">
    <property type="entry name" value="C-type lectin-like"/>
    <property type="match status" value="1"/>
</dbReference>
<dbReference type="PROSITE" id="PS50041">
    <property type="entry name" value="C_TYPE_LECTIN_2"/>
    <property type="match status" value="1"/>
</dbReference>
<reference key="1">
    <citation type="journal article" date="2001" name="Cell. Immunol.">
        <title>Molecular cloning and expression pattern of porcine myeloid DAP12-associating lectin-1.</title>
        <authorList>
            <person name="Yim D."/>
            <person name="Jie H.-B."/>
            <person name="Sotiriadis J."/>
            <person name="Kim Y.-S."/>
            <person name="Kim Y.B."/>
        </authorList>
    </citation>
    <scope>NUCLEOTIDE SEQUENCE [MRNA] (ISOFORMS 1 AND 2)</scope>
    <scope>FUNCTION</scope>
    <scope>TISSUE SPECIFICITY</scope>
    <scope>INTERACTION WITH TYROBP</scope>
</reference>
<accession>Q9GLF3</accession>
<accession>Q9GLF4</accession>
<proteinExistence type="evidence at protein level"/>
<comment type="function">
    <text evidence="2 5">Functions as a positive regulator of osteoclastogenesis (By similarity). Cell surface receptor that signals via TYROBP (PubMed:11414735). Regulates inflammatory responses (By similarity).</text>
</comment>
<comment type="subunit">
    <text evidence="1 2 5">Monomer (By similarity). Homodimer (By similarity). The majority of CLEC5A is expressed as a monomeric form on macrophages (By similarity). Interacts with TYROBP/DAP12 (PubMed:11414735). The interaction with TYROBP is required for CLEC5 cell surface expression (PubMed:11414735). Interacts with HCST/DAP10 (By similarity). Forms a CLEC5A/TYROBP/HCST trimolecular complex depending almost solely on TYROBP (By similarity).</text>
</comment>
<comment type="subcellular location">
    <subcellularLocation>
        <location evidence="1">Cell membrane</location>
        <topology evidence="1">Single-pass type II membrane protein</topology>
    </subcellularLocation>
</comment>
<comment type="alternative products">
    <event type="alternative splicing"/>
    <isoform>
        <id>Q9GLF3-1</id>
        <name>1</name>
        <sequence type="displayed"/>
    </isoform>
    <isoform>
        <id>Q9GLF3-2</id>
        <name>2</name>
        <sequence type="described" ref="VSP_012841"/>
    </isoform>
</comment>
<comment type="tissue specificity">
    <text evidence="5">Constitutively expressed in monocytes and macrophages.</text>
</comment>
<comment type="PTM">
    <text evidence="2">N-glycosylated. Contains sialic acid residues.</text>
</comment>
<comment type="miscellaneous">
    <text evidence="2">Acts as a key regulator of synovial injury and bone erosion during autoimmune joint inflammation when its activation leads to enhanced recruitment of inflammatory macrophages and neutrophils to the joints.</text>
</comment>
<sequence>MNWHMIISGLIVVVLKIVGMTFFLLYFPQIFGEHNVSFSPTERPGTVPQIFGSSNVSFTPTESFGTVCPTGWDFHQGRCFFLSTSENSWNNSMNFCKQKGSTLAIVNTPEKLKFLQNISGAEKYFIGLLYQPAEKMWRWINNSVFNGSVISHSHNFNCVTIGLTKTFDAASCDVNYRSICEKSAQ</sequence>
<keyword id="KW-0025">Alternative splicing</keyword>
<keyword id="KW-1003">Cell membrane</keyword>
<keyword id="KW-1015">Disulfide bond</keyword>
<keyword id="KW-0325">Glycoprotein</keyword>
<keyword id="KW-0391">Immunity</keyword>
<keyword id="KW-0430">Lectin</keyword>
<keyword id="KW-0472">Membrane</keyword>
<keyword id="KW-1185">Reference proteome</keyword>
<keyword id="KW-0735">Signal-anchor</keyword>
<keyword id="KW-0812">Transmembrane</keyword>
<keyword id="KW-1133">Transmembrane helix</keyword>
<name>CLC5A_PIG</name>
<gene>
    <name type="primary">CLEC5A</name>
    <name type="synonym">CLECSF5</name>
    <name type="synonym">MDL1</name>
</gene>
<protein>
    <recommendedName>
        <fullName>C-type lectin domain family 5 member A</fullName>
    </recommendedName>
    <alternativeName>
        <fullName>C-type lectin superfamily member 5</fullName>
    </alternativeName>
    <alternativeName>
        <fullName>Myeloid DAP12-associating lectin 1</fullName>
        <shortName>MDL-1</shortName>
    </alternativeName>
</protein>